<proteinExistence type="inferred from homology"/>
<name>GCH1_ECO8A</name>
<dbReference type="EC" id="3.5.4.16" evidence="1"/>
<dbReference type="EMBL" id="CU928160">
    <property type="protein sequence ID" value="CAQ99076.1"/>
    <property type="molecule type" value="Genomic_DNA"/>
</dbReference>
<dbReference type="RefSeq" id="WP_001139613.1">
    <property type="nucleotide sequence ID" value="NC_011741.1"/>
</dbReference>
<dbReference type="SMR" id="B7M4Z9"/>
<dbReference type="GeneID" id="93775029"/>
<dbReference type="KEGG" id="ecr:ECIAI1_2231"/>
<dbReference type="HOGENOM" id="CLU_049768_3_2_6"/>
<dbReference type="UniPathway" id="UPA00848">
    <property type="reaction ID" value="UER00151"/>
</dbReference>
<dbReference type="GO" id="GO:0005737">
    <property type="term" value="C:cytoplasm"/>
    <property type="evidence" value="ECO:0007669"/>
    <property type="project" value="TreeGrafter"/>
</dbReference>
<dbReference type="GO" id="GO:0005525">
    <property type="term" value="F:GTP binding"/>
    <property type="evidence" value="ECO:0007669"/>
    <property type="project" value="TreeGrafter"/>
</dbReference>
<dbReference type="GO" id="GO:0003934">
    <property type="term" value="F:GTP cyclohydrolase I activity"/>
    <property type="evidence" value="ECO:0007669"/>
    <property type="project" value="UniProtKB-UniRule"/>
</dbReference>
<dbReference type="GO" id="GO:0008270">
    <property type="term" value="F:zinc ion binding"/>
    <property type="evidence" value="ECO:0007669"/>
    <property type="project" value="UniProtKB-UniRule"/>
</dbReference>
<dbReference type="GO" id="GO:0006730">
    <property type="term" value="P:one-carbon metabolic process"/>
    <property type="evidence" value="ECO:0007669"/>
    <property type="project" value="UniProtKB-UniRule"/>
</dbReference>
<dbReference type="GO" id="GO:0006729">
    <property type="term" value="P:tetrahydrobiopterin biosynthetic process"/>
    <property type="evidence" value="ECO:0007669"/>
    <property type="project" value="TreeGrafter"/>
</dbReference>
<dbReference type="GO" id="GO:0046654">
    <property type="term" value="P:tetrahydrofolate biosynthetic process"/>
    <property type="evidence" value="ECO:0007669"/>
    <property type="project" value="UniProtKB-UniRule"/>
</dbReference>
<dbReference type="CDD" id="cd00642">
    <property type="entry name" value="GTP_cyclohydro1"/>
    <property type="match status" value="1"/>
</dbReference>
<dbReference type="FunFam" id="1.10.286.10:FF:000002">
    <property type="entry name" value="GTP cyclohydrolase 1"/>
    <property type="match status" value="1"/>
</dbReference>
<dbReference type="FunFam" id="3.30.1130.10:FF:000001">
    <property type="entry name" value="GTP cyclohydrolase 1"/>
    <property type="match status" value="1"/>
</dbReference>
<dbReference type="Gene3D" id="1.10.286.10">
    <property type="match status" value="1"/>
</dbReference>
<dbReference type="Gene3D" id="3.30.1130.10">
    <property type="match status" value="1"/>
</dbReference>
<dbReference type="HAMAP" id="MF_00223">
    <property type="entry name" value="FolE"/>
    <property type="match status" value="1"/>
</dbReference>
<dbReference type="InterPro" id="IPR043133">
    <property type="entry name" value="GTP-CH-I_C/QueF"/>
</dbReference>
<dbReference type="InterPro" id="IPR043134">
    <property type="entry name" value="GTP-CH-I_N"/>
</dbReference>
<dbReference type="InterPro" id="IPR001474">
    <property type="entry name" value="GTP_CycHdrlase_I"/>
</dbReference>
<dbReference type="InterPro" id="IPR018234">
    <property type="entry name" value="GTP_CycHdrlase_I_CS"/>
</dbReference>
<dbReference type="InterPro" id="IPR020602">
    <property type="entry name" value="GTP_CycHdrlase_I_dom"/>
</dbReference>
<dbReference type="NCBIfam" id="TIGR00063">
    <property type="entry name" value="folE"/>
    <property type="match status" value="1"/>
</dbReference>
<dbReference type="NCBIfam" id="NF006824">
    <property type="entry name" value="PRK09347.1-1"/>
    <property type="match status" value="1"/>
</dbReference>
<dbReference type="NCBIfam" id="NF006826">
    <property type="entry name" value="PRK09347.1-3"/>
    <property type="match status" value="1"/>
</dbReference>
<dbReference type="PANTHER" id="PTHR11109:SF7">
    <property type="entry name" value="GTP CYCLOHYDROLASE 1"/>
    <property type="match status" value="1"/>
</dbReference>
<dbReference type="PANTHER" id="PTHR11109">
    <property type="entry name" value="GTP CYCLOHYDROLASE I"/>
    <property type="match status" value="1"/>
</dbReference>
<dbReference type="Pfam" id="PF01227">
    <property type="entry name" value="GTP_cyclohydroI"/>
    <property type="match status" value="1"/>
</dbReference>
<dbReference type="SUPFAM" id="SSF55620">
    <property type="entry name" value="Tetrahydrobiopterin biosynthesis enzymes-like"/>
    <property type="match status" value="1"/>
</dbReference>
<dbReference type="PROSITE" id="PS00859">
    <property type="entry name" value="GTP_CYCLOHYDROL_1_1"/>
    <property type="match status" value="1"/>
</dbReference>
<dbReference type="PROSITE" id="PS00860">
    <property type="entry name" value="GTP_CYCLOHYDROL_1_2"/>
    <property type="match status" value="1"/>
</dbReference>
<organism>
    <name type="scientific">Escherichia coli O8 (strain IAI1)</name>
    <dbReference type="NCBI Taxonomy" id="585034"/>
    <lineage>
        <taxon>Bacteria</taxon>
        <taxon>Pseudomonadati</taxon>
        <taxon>Pseudomonadota</taxon>
        <taxon>Gammaproteobacteria</taxon>
        <taxon>Enterobacterales</taxon>
        <taxon>Enterobacteriaceae</taxon>
        <taxon>Escherichia</taxon>
    </lineage>
</organism>
<comment type="catalytic activity">
    <reaction evidence="1">
        <text>GTP + H2O = 7,8-dihydroneopterin 3'-triphosphate + formate + H(+)</text>
        <dbReference type="Rhea" id="RHEA:17473"/>
        <dbReference type="ChEBI" id="CHEBI:15377"/>
        <dbReference type="ChEBI" id="CHEBI:15378"/>
        <dbReference type="ChEBI" id="CHEBI:15740"/>
        <dbReference type="ChEBI" id="CHEBI:37565"/>
        <dbReference type="ChEBI" id="CHEBI:58462"/>
        <dbReference type="EC" id="3.5.4.16"/>
    </reaction>
</comment>
<comment type="pathway">
    <text evidence="1">Cofactor biosynthesis; 7,8-dihydroneopterin triphosphate biosynthesis; 7,8-dihydroneopterin triphosphate from GTP: step 1/1.</text>
</comment>
<comment type="subunit">
    <text evidence="1">Homomer.</text>
</comment>
<comment type="similarity">
    <text evidence="1">Belongs to the GTP cyclohydrolase I family.</text>
</comment>
<feature type="chain" id="PRO_1000190076" description="GTP cyclohydrolase 1">
    <location>
        <begin position="1"/>
        <end position="222"/>
    </location>
</feature>
<feature type="binding site" evidence="1">
    <location>
        <position position="111"/>
    </location>
    <ligand>
        <name>Zn(2+)</name>
        <dbReference type="ChEBI" id="CHEBI:29105"/>
    </ligand>
</feature>
<feature type="binding site" evidence="1">
    <location>
        <position position="114"/>
    </location>
    <ligand>
        <name>Zn(2+)</name>
        <dbReference type="ChEBI" id="CHEBI:29105"/>
    </ligand>
</feature>
<feature type="binding site" evidence="1">
    <location>
        <position position="182"/>
    </location>
    <ligand>
        <name>Zn(2+)</name>
        <dbReference type="ChEBI" id="CHEBI:29105"/>
    </ligand>
</feature>
<protein>
    <recommendedName>
        <fullName evidence="1">GTP cyclohydrolase 1</fullName>
        <ecNumber evidence="1">3.5.4.16</ecNumber>
    </recommendedName>
    <alternativeName>
        <fullName evidence="1">GTP cyclohydrolase I</fullName>
        <shortName evidence="1">GTP-CH-I</shortName>
    </alternativeName>
</protein>
<keyword id="KW-0378">Hydrolase</keyword>
<keyword id="KW-0479">Metal-binding</keyword>
<keyword id="KW-0554">One-carbon metabolism</keyword>
<keyword id="KW-0862">Zinc</keyword>
<reference key="1">
    <citation type="journal article" date="2009" name="PLoS Genet.">
        <title>Organised genome dynamics in the Escherichia coli species results in highly diverse adaptive paths.</title>
        <authorList>
            <person name="Touchon M."/>
            <person name="Hoede C."/>
            <person name="Tenaillon O."/>
            <person name="Barbe V."/>
            <person name="Baeriswyl S."/>
            <person name="Bidet P."/>
            <person name="Bingen E."/>
            <person name="Bonacorsi S."/>
            <person name="Bouchier C."/>
            <person name="Bouvet O."/>
            <person name="Calteau A."/>
            <person name="Chiapello H."/>
            <person name="Clermont O."/>
            <person name="Cruveiller S."/>
            <person name="Danchin A."/>
            <person name="Diard M."/>
            <person name="Dossat C."/>
            <person name="Karoui M.E."/>
            <person name="Frapy E."/>
            <person name="Garry L."/>
            <person name="Ghigo J.M."/>
            <person name="Gilles A.M."/>
            <person name="Johnson J."/>
            <person name="Le Bouguenec C."/>
            <person name="Lescat M."/>
            <person name="Mangenot S."/>
            <person name="Martinez-Jehanne V."/>
            <person name="Matic I."/>
            <person name="Nassif X."/>
            <person name="Oztas S."/>
            <person name="Petit M.A."/>
            <person name="Pichon C."/>
            <person name="Rouy Z."/>
            <person name="Ruf C.S."/>
            <person name="Schneider D."/>
            <person name="Tourret J."/>
            <person name="Vacherie B."/>
            <person name="Vallenet D."/>
            <person name="Medigue C."/>
            <person name="Rocha E.P.C."/>
            <person name="Denamur E."/>
        </authorList>
    </citation>
    <scope>NUCLEOTIDE SEQUENCE [LARGE SCALE GENOMIC DNA]</scope>
    <source>
        <strain>IAI1</strain>
    </source>
</reference>
<evidence type="ECO:0000255" key="1">
    <source>
        <dbReference type="HAMAP-Rule" id="MF_00223"/>
    </source>
</evidence>
<accession>B7M4Z9</accession>
<gene>
    <name evidence="1" type="primary">folE</name>
    <name type="ordered locus">ECIAI1_2231</name>
</gene>
<sequence length="222" mass="24831">MPSLSKEAALVHEALVARGLETPLRPPVHEMDNETRKSLIAGHMTEIMQLLNLDLADDSLMETPHRIAKMYVDEIFSGLDYANFPKITLIENKMKVDEMVTVRDITLTSTCEHHFVTIDGKATVAYIPKDSVIGLSKINRIVQFFAQRPQVQERLTQQILIALQTLLGTNNVAVSIDAVHYCVKARGIRDATSATTTTSLGGLFKSSQNTRHEFLRAVRHHN</sequence>